<organism>
    <name type="scientific">Cereibacter sphaeroides (strain ATCC 17029 / ATH 2.4.9)</name>
    <name type="common">Rhodobacter sphaeroides</name>
    <dbReference type="NCBI Taxonomy" id="349101"/>
    <lineage>
        <taxon>Bacteria</taxon>
        <taxon>Pseudomonadati</taxon>
        <taxon>Pseudomonadota</taxon>
        <taxon>Alphaproteobacteria</taxon>
        <taxon>Rhodobacterales</taxon>
        <taxon>Paracoccaceae</taxon>
        <taxon>Cereibacter</taxon>
    </lineage>
</organism>
<accession>A3PM22</accession>
<gene>
    <name evidence="1" type="primary">murA</name>
    <name type="ordered locus">Rsph17029_2286</name>
</gene>
<feature type="chain" id="PRO_1000023088" description="UDP-N-acetylglucosamine 1-carboxyvinyltransferase">
    <location>
        <begin position="1"/>
        <end position="422"/>
    </location>
</feature>
<feature type="active site" description="Proton donor" evidence="1">
    <location>
        <position position="118"/>
    </location>
</feature>
<feature type="binding site" evidence="1">
    <location>
        <begin position="22"/>
        <end position="23"/>
    </location>
    <ligand>
        <name>phosphoenolpyruvate</name>
        <dbReference type="ChEBI" id="CHEBI:58702"/>
    </ligand>
</feature>
<feature type="binding site" evidence="1">
    <location>
        <position position="94"/>
    </location>
    <ligand>
        <name>UDP-N-acetyl-alpha-D-glucosamine</name>
        <dbReference type="ChEBI" id="CHEBI:57705"/>
    </ligand>
</feature>
<feature type="binding site" evidence="1">
    <location>
        <begin position="123"/>
        <end position="127"/>
    </location>
    <ligand>
        <name>UDP-N-acetyl-alpha-D-glucosamine</name>
        <dbReference type="ChEBI" id="CHEBI:57705"/>
    </ligand>
</feature>
<feature type="binding site" evidence="1">
    <location>
        <position position="309"/>
    </location>
    <ligand>
        <name>UDP-N-acetyl-alpha-D-glucosamine</name>
        <dbReference type="ChEBI" id="CHEBI:57705"/>
    </ligand>
</feature>
<feature type="binding site" evidence="1">
    <location>
        <position position="331"/>
    </location>
    <ligand>
        <name>UDP-N-acetyl-alpha-D-glucosamine</name>
        <dbReference type="ChEBI" id="CHEBI:57705"/>
    </ligand>
</feature>
<feature type="modified residue" description="2-(S-cysteinyl)pyruvic acid O-phosphothioketal" evidence="1">
    <location>
        <position position="118"/>
    </location>
</feature>
<proteinExistence type="inferred from homology"/>
<dbReference type="EC" id="2.5.1.7" evidence="1"/>
<dbReference type="EMBL" id="CP000577">
    <property type="protein sequence ID" value="ABN77388.1"/>
    <property type="molecule type" value="Genomic_DNA"/>
</dbReference>
<dbReference type="RefSeq" id="WP_011841569.1">
    <property type="nucleotide sequence ID" value="NC_009049.1"/>
</dbReference>
<dbReference type="SMR" id="A3PM22"/>
<dbReference type="KEGG" id="rsh:Rsph17029_2286"/>
<dbReference type="HOGENOM" id="CLU_027387_0_0_5"/>
<dbReference type="UniPathway" id="UPA00219"/>
<dbReference type="GO" id="GO:0005737">
    <property type="term" value="C:cytoplasm"/>
    <property type="evidence" value="ECO:0007669"/>
    <property type="project" value="UniProtKB-SubCell"/>
</dbReference>
<dbReference type="GO" id="GO:0008760">
    <property type="term" value="F:UDP-N-acetylglucosamine 1-carboxyvinyltransferase activity"/>
    <property type="evidence" value="ECO:0007669"/>
    <property type="project" value="UniProtKB-UniRule"/>
</dbReference>
<dbReference type="GO" id="GO:0051301">
    <property type="term" value="P:cell division"/>
    <property type="evidence" value="ECO:0007669"/>
    <property type="project" value="UniProtKB-KW"/>
</dbReference>
<dbReference type="GO" id="GO:0071555">
    <property type="term" value="P:cell wall organization"/>
    <property type="evidence" value="ECO:0007669"/>
    <property type="project" value="UniProtKB-KW"/>
</dbReference>
<dbReference type="GO" id="GO:0009252">
    <property type="term" value="P:peptidoglycan biosynthetic process"/>
    <property type="evidence" value="ECO:0007669"/>
    <property type="project" value="UniProtKB-UniRule"/>
</dbReference>
<dbReference type="GO" id="GO:0008360">
    <property type="term" value="P:regulation of cell shape"/>
    <property type="evidence" value="ECO:0007669"/>
    <property type="project" value="UniProtKB-KW"/>
</dbReference>
<dbReference type="GO" id="GO:0019277">
    <property type="term" value="P:UDP-N-acetylgalactosamine biosynthetic process"/>
    <property type="evidence" value="ECO:0007669"/>
    <property type="project" value="InterPro"/>
</dbReference>
<dbReference type="CDD" id="cd01555">
    <property type="entry name" value="UdpNAET"/>
    <property type="match status" value="1"/>
</dbReference>
<dbReference type="FunFam" id="3.65.10.10:FF:000001">
    <property type="entry name" value="UDP-N-acetylglucosamine 1-carboxyvinyltransferase"/>
    <property type="match status" value="1"/>
</dbReference>
<dbReference type="Gene3D" id="3.65.10.10">
    <property type="entry name" value="Enolpyruvate transferase domain"/>
    <property type="match status" value="2"/>
</dbReference>
<dbReference type="HAMAP" id="MF_00111">
    <property type="entry name" value="MurA"/>
    <property type="match status" value="1"/>
</dbReference>
<dbReference type="InterPro" id="IPR001986">
    <property type="entry name" value="Enolpyruvate_Tfrase_dom"/>
</dbReference>
<dbReference type="InterPro" id="IPR036968">
    <property type="entry name" value="Enolpyruvate_Tfrase_sf"/>
</dbReference>
<dbReference type="InterPro" id="IPR050068">
    <property type="entry name" value="MurA_subfamily"/>
</dbReference>
<dbReference type="InterPro" id="IPR013792">
    <property type="entry name" value="RNA3'P_cycl/enolpyr_Trfase_a/b"/>
</dbReference>
<dbReference type="InterPro" id="IPR005750">
    <property type="entry name" value="UDP_GlcNAc_COvinyl_MurA"/>
</dbReference>
<dbReference type="NCBIfam" id="TIGR01072">
    <property type="entry name" value="murA"/>
    <property type="match status" value="1"/>
</dbReference>
<dbReference type="NCBIfam" id="NF006873">
    <property type="entry name" value="PRK09369.1"/>
    <property type="match status" value="1"/>
</dbReference>
<dbReference type="PANTHER" id="PTHR43783">
    <property type="entry name" value="UDP-N-ACETYLGLUCOSAMINE 1-CARBOXYVINYLTRANSFERASE"/>
    <property type="match status" value="1"/>
</dbReference>
<dbReference type="PANTHER" id="PTHR43783:SF1">
    <property type="entry name" value="UDP-N-ACETYLGLUCOSAMINE 1-CARBOXYVINYLTRANSFERASE"/>
    <property type="match status" value="1"/>
</dbReference>
<dbReference type="Pfam" id="PF00275">
    <property type="entry name" value="EPSP_synthase"/>
    <property type="match status" value="1"/>
</dbReference>
<dbReference type="SUPFAM" id="SSF55205">
    <property type="entry name" value="EPT/RTPC-like"/>
    <property type="match status" value="1"/>
</dbReference>
<keyword id="KW-0131">Cell cycle</keyword>
<keyword id="KW-0132">Cell division</keyword>
<keyword id="KW-0133">Cell shape</keyword>
<keyword id="KW-0961">Cell wall biogenesis/degradation</keyword>
<keyword id="KW-0963">Cytoplasm</keyword>
<keyword id="KW-0573">Peptidoglycan synthesis</keyword>
<keyword id="KW-0670">Pyruvate</keyword>
<keyword id="KW-0808">Transferase</keyword>
<sequence>MDSILVKGNGELRGQIPIAGAKNACLALMPATLLSDEPLTLTNAPRLSDIRTMTQLLQSLGAEVASLQGGQVLALSSHALTDHRADYDIVRKMRASILVLGPMLARDGHAVVSLPGGCAIGARPVDLHLKALEAMGAELDLRDGYIHAKAPAGGLKGARVVFPLVSVGATENALMAATLAKGTTVLENAAREPEIVDLARCLRRMGAQIEGEGSSTITIEGVDRLGGATHPVVTDRIELGTYMLAPAICGGEVELLGGRIELVGAFCEKLDAAGISVEETERGLRVARRNGRVKAVDVMTEPFPGFPTDLQAQMMALLCTAEGTSVLEERIFENRFMHAPELIRMGARIEVHGGTATVTGVEKLRGAPVMATDLRASVSLILAGLAAEGETIVSRVYHLDRGYERVEEKLSACGAQIRRIPG</sequence>
<evidence type="ECO:0000255" key="1">
    <source>
        <dbReference type="HAMAP-Rule" id="MF_00111"/>
    </source>
</evidence>
<protein>
    <recommendedName>
        <fullName evidence="1">UDP-N-acetylglucosamine 1-carboxyvinyltransferase</fullName>
        <ecNumber evidence="1">2.5.1.7</ecNumber>
    </recommendedName>
    <alternativeName>
        <fullName evidence="1">Enoylpyruvate transferase</fullName>
    </alternativeName>
    <alternativeName>
        <fullName evidence="1">UDP-N-acetylglucosamine enolpyruvyl transferase</fullName>
        <shortName evidence="1">EPT</shortName>
    </alternativeName>
</protein>
<reference key="1">
    <citation type="submission" date="2007-02" db="EMBL/GenBank/DDBJ databases">
        <title>Complete sequence of chromosome 1 of Rhodobacter sphaeroides ATCC 17029.</title>
        <authorList>
            <person name="Copeland A."/>
            <person name="Lucas S."/>
            <person name="Lapidus A."/>
            <person name="Barry K."/>
            <person name="Detter J.C."/>
            <person name="Glavina del Rio T."/>
            <person name="Hammon N."/>
            <person name="Israni S."/>
            <person name="Dalin E."/>
            <person name="Tice H."/>
            <person name="Pitluck S."/>
            <person name="Kiss H."/>
            <person name="Brettin T."/>
            <person name="Bruce D."/>
            <person name="Han C."/>
            <person name="Tapia R."/>
            <person name="Gilna P."/>
            <person name="Schmutz J."/>
            <person name="Larimer F."/>
            <person name="Land M."/>
            <person name="Hauser L."/>
            <person name="Kyrpides N."/>
            <person name="Mikhailova N."/>
            <person name="Richardson P."/>
            <person name="Mackenzie C."/>
            <person name="Choudhary M."/>
            <person name="Donohue T.J."/>
            <person name="Kaplan S."/>
        </authorList>
    </citation>
    <scope>NUCLEOTIDE SEQUENCE [LARGE SCALE GENOMIC DNA]</scope>
    <source>
        <strain>ATCC 17029 / ATH 2.4.9</strain>
    </source>
</reference>
<name>MURA_CERS1</name>
<comment type="function">
    <text evidence="1">Cell wall formation. Adds enolpyruvyl to UDP-N-acetylglucosamine.</text>
</comment>
<comment type="catalytic activity">
    <reaction evidence="1">
        <text>phosphoenolpyruvate + UDP-N-acetyl-alpha-D-glucosamine = UDP-N-acetyl-3-O-(1-carboxyvinyl)-alpha-D-glucosamine + phosphate</text>
        <dbReference type="Rhea" id="RHEA:18681"/>
        <dbReference type="ChEBI" id="CHEBI:43474"/>
        <dbReference type="ChEBI" id="CHEBI:57705"/>
        <dbReference type="ChEBI" id="CHEBI:58702"/>
        <dbReference type="ChEBI" id="CHEBI:68483"/>
        <dbReference type="EC" id="2.5.1.7"/>
    </reaction>
</comment>
<comment type="pathway">
    <text evidence="1">Cell wall biogenesis; peptidoglycan biosynthesis.</text>
</comment>
<comment type="subcellular location">
    <subcellularLocation>
        <location evidence="1">Cytoplasm</location>
    </subcellularLocation>
</comment>
<comment type="similarity">
    <text evidence="1">Belongs to the EPSP synthase family. MurA subfamily.</text>
</comment>